<comment type="function">
    <text evidence="1">Catalyzes the conversion of glucosamine-6-phosphate to glucosamine-1-phosphate.</text>
</comment>
<comment type="catalytic activity">
    <reaction evidence="1">
        <text>alpha-D-glucosamine 1-phosphate = D-glucosamine 6-phosphate</text>
        <dbReference type="Rhea" id="RHEA:23424"/>
        <dbReference type="ChEBI" id="CHEBI:58516"/>
        <dbReference type="ChEBI" id="CHEBI:58725"/>
        <dbReference type="EC" id="5.4.2.10"/>
    </reaction>
</comment>
<comment type="cofactor">
    <cofactor evidence="1">
        <name>Mg(2+)</name>
        <dbReference type="ChEBI" id="CHEBI:18420"/>
    </cofactor>
    <text evidence="1">Binds 1 Mg(2+) ion per subunit.</text>
</comment>
<comment type="PTM">
    <text evidence="1">Activated by phosphorylation.</text>
</comment>
<comment type="similarity">
    <text evidence="1">Belongs to the phosphohexose mutase family.</text>
</comment>
<feature type="chain" id="PRO_0000147921" description="Phosphoglucosamine mutase">
    <location>
        <begin position="1"/>
        <end position="444"/>
    </location>
</feature>
<feature type="active site" description="Phosphoserine intermediate" evidence="1">
    <location>
        <position position="104"/>
    </location>
</feature>
<feature type="binding site" description="via phosphate group" evidence="1">
    <location>
        <position position="104"/>
    </location>
    <ligand>
        <name>Mg(2+)</name>
        <dbReference type="ChEBI" id="CHEBI:18420"/>
    </ligand>
</feature>
<feature type="binding site" evidence="1">
    <location>
        <position position="243"/>
    </location>
    <ligand>
        <name>Mg(2+)</name>
        <dbReference type="ChEBI" id="CHEBI:18420"/>
    </ligand>
</feature>
<feature type="binding site" evidence="1">
    <location>
        <position position="245"/>
    </location>
    <ligand>
        <name>Mg(2+)</name>
        <dbReference type="ChEBI" id="CHEBI:18420"/>
    </ligand>
</feature>
<feature type="binding site" evidence="1">
    <location>
        <position position="247"/>
    </location>
    <ligand>
        <name>Mg(2+)</name>
        <dbReference type="ChEBI" id="CHEBI:18420"/>
    </ligand>
</feature>
<feature type="modified residue" description="Phosphoserine" evidence="1">
    <location>
        <position position="104"/>
    </location>
</feature>
<reference key="1">
    <citation type="journal article" date="2000" name="Science">
        <title>Complete genome sequence of Neisseria meningitidis serogroup B strain MC58.</title>
        <authorList>
            <person name="Tettelin H."/>
            <person name="Saunders N.J."/>
            <person name="Heidelberg J.F."/>
            <person name="Jeffries A.C."/>
            <person name="Nelson K.E."/>
            <person name="Eisen J.A."/>
            <person name="Ketchum K.A."/>
            <person name="Hood D.W."/>
            <person name="Peden J.F."/>
            <person name="Dodson R.J."/>
            <person name="Nelson W.C."/>
            <person name="Gwinn M.L."/>
            <person name="DeBoy R.T."/>
            <person name="Peterson J.D."/>
            <person name="Hickey E.K."/>
            <person name="Haft D.H."/>
            <person name="Salzberg S.L."/>
            <person name="White O."/>
            <person name="Fleischmann R.D."/>
            <person name="Dougherty B.A."/>
            <person name="Mason T.M."/>
            <person name="Ciecko A."/>
            <person name="Parksey D.S."/>
            <person name="Blair E."/>
            <person name="Cittone H."/>
            <person name="Clark E.B."/>
            <person name="Cotton M.D."/>
            <person name="Utterback T.R."/>
            <person name="Khouri H.M."/>
            <person name="Qin H."/>
            <person name="Vamathevan J.J."/>
            <person name="Gill J."/>
            <person name="Scarlato V."/>
            <person name="Masignani V."/>
            <person name="Pizza M."/>
            <person name="Grandi G."/>
            <person name="Sun L."/>
            <person name="Smith H.O."/>
            <person name="Fraser C.M."/>
            <person name="Moxon E.R."/>
            <person name="Rappuoli R."/>
            <person name="Venter J.C."/>
        </authorList>
    </citation>
    <scope>NUCLEOTIDE SEQUENCE [LARGE SCALE GENOMIC DNA]</scope>
    <source>
        <strain>ATCC BAA-335 / MC58</strain>
    </source>
</reference>
<sequence length="444" mass="47688">MAKKYFGTDGVRGEVGQFPITPDFVLKLGYAAGQVLVQHDTDQKPTVLIGKDTRISGYMLEAALVAGFTAAGVNVVQTGPLPTPGVAYLTRALRLSAGVMISASHNAYSDNGIKFFAEGGVKLSDEVELEIEAKIDGEMKTQPSARLGRARRISGADDRYIEFCKSTFPSHSDLRGLKLVVDTANGAGYGVAPKVFHELGAQVVSIGNEPNGYNINEKCGATYTKTLQAAVLQHEADYGIALDGDGDRLMMVDKNGQVYDGDSLIYVIAKARAREGINIGGVVGTVMTNMAMEIALKEQGVDFCRAKVGDRYVLEQLNQRGWLIGGEASGHILCMDKHNTGDGIISALQVLAALQTLNQDLATVCADWQPYPQTMINVRIQKGQQWQEASKDVLAEVEKELEGKGRVVLRASGTEPVVRVMVEARQADWAREGAERIAAAIGGI</sequence>
<organism>
    <name type="scientific">Neisseria meningitidis serogroup B (strain ATCC BAA-335 / MC58)</name>
    <dbReference type="NCBI Taxonomy" id="122586"/>
    <lineage>
        <taxon>Bacteria</taxon>
        <taxon>Pseudomonadati</taxon>
        <taxon>Pseudomonadota</taxon>
        <taxon>Betaproteobacteria</taxon>
        <taxon>Neisseriales</taxon>
        <taxon>Neisseriaceae</taxon>
        <taxon>Neisseria</taxon>
    </lineage>
</organism>
<proteinExistence type="inferred from homology"/>
<dbReference type="EC" id="5.4.2.10" evidence="1"/>
<dbReference type="EMBL" id="AE002098">
    <property type="protein sequence ID" value="AAF42038.1"/>
    <property type="molecule type" value="Genomic_DNA"/>
</dbReference>
<dbReference type="PIR" id="C81054">
    <property type="entry name" value="C81054"/>
</dbReference>
<dbReference type="RefSeq" id="NP_274694.1">
    <property type="nucleotide sequence ID" value="NC_003112.2"/>
</dbReference>
<dbReference type="RefSeq" id="WP_002224978.1">
    <property type="nucleotide sequence ID" value="NC_003112.2"/>
</dbReference>
<dbReference type="SMR" id="Q9JY89"/>
<dbReference type="FunCoup" id="Q9JY89">
    <property type="interactions" value="395"/>
</dbReference>
<dbReference type="STRING" id="122586.NMB1690"/>
<dbReference type="PaxDb" id="122586-NMB1690"/>
<dbReference type="KEGG" id="nme:NMB1690"/>
<dbReference type="PATRIC" id="fig|122586.8.peg.2173"/>
<dbReference type="HOGENOM" id="CLU_016950_7_0_4"/>
<dbReference type="InParanoid" id="Q9JY89"/>
<dbReference type="OrthoDB" id="9803322at2"/>
<dbReference type="Proteomes" id="UP000000425">
    <property type="component" value="Chromosome"/>
</dbReference>
<dbReference type="GO" id="GO:0005829">
    <property type="term" value="C:cytosol"/>
    <property type="evidence" value="ECO:0000318"/>
    <property type="project" value="GO_Central"/>
</dbReference>
<dbReference type="GO" id="GO:0000287">
    <property type="term" value="F:magnesium ion binding"/>
    <property type="evidence" value="ECO:0007669"/>
    <property type="project" value="UniProtKB-UniRule"/>
</dbReference>
<dbReference type="GO" id="GO:0008966">
    <property type="term" value="F:phosphoglucosamine mutase activity"/>
    <property type="evidence" value="ECO:0000318"/>
    <property type="project" value="GO_Central"/>
</dbReference>
<dbReference type="GO" id="GO:0004615">
    <property type="term" value="F:phosphomannomutase activity"/>
    <property type="evidence" value="ECO:0000318"/>
    <property type="project" value="GO_Central"/>
</dbReference>
<dbReference type="GO" id="GO:0005975">
    <property type="term" value="P:carbohydrate metabolic process"/>
    <property type="evidence" value="ECO:0007669"/>
    <property type="project" value="InterPro"/>
</dbReference>
<dbReference type="GO" id="GO:0009252">
    <property type="term" value="P:peptidoglycan biosynthetic process"/>
    <property type="evidence" value="ECO:0000318"/>
    <property type="project" value="GO_Central"/>
</dbReference>
<dbReference type="GO" id="GO:0006048">
    <property type="term" value="P:UDP-N-acetylglucosamine biosynthetic process"/>
    <property type="evidence" value="ECO:0000318"/>
    <property type="project" value="GO_Central"/>
</dbReference>
<dbReference type="CDD" id="cd05802">
    <property type="entry name" value="GlmM"/>
    <property type="match status" value="1"/>
</dbReference>
<dbReference type="FunFam" id="3.30.310.50:FF:000001">
    <property type="entry name" value="Phosphoglucosamine mutase"/>
    <property type="match status" value="1"/>
</dbReference>
<dbReference type="FunFam" id="3.40.120.10:FF:000001">
    <property type="entry name" value="Phosphoglucosamine mutase"/>
    <property type="match status" value="1"/>
</dbReference>
<dbReference type="FunFam" id="3.40.120.10:FF:000003">
    <property type="entry name" value="Phosphoglucosamine mutase"/>
    <property type="match status" value="1"/>
</dbReference>
<dbReference type="Gene3D" id="3.40.120.10">
    <property type="entry name" value="Alpha-D-Glucose-1,6-Bisphosphate, subunit A, domain 3"/>
    <property type="match status" value="3"/>
</dbReference>
<dbReference type="Gene3D" id="3.30.310.50">
    <property type="entry name" value="Alpha-D-phosphohexomutase, C-terminal domain"/>
    <property type="match status" value="1"/>
</dbReference>
<dbReference type="HAMAP" id="MF_01554_B">
    <property type="entry name" value="GlmM_B"/>
    <property type="match status" value="1"/>
</dbReference>
<dbReference type="InterPro" id="IPR005844">
    <property type="entry name" value="A-D-PHexomutase_a/b/a-I"/>
</dbReference>
<dbReference type="InterPro" id="IPR016055">
    <property type="entry name" value="A-D-PHexomutase_a/b/a-I/II/III"/>
</dbReference>
<dbReference type="InterPro" id="IPR005845">
    <property type="entry name" value="A-D-PHexomutase_a/b/a-II"/>
</dbReference>
<dbReference type="InterPro" id="IPR005846">
    <property type="entry name" value="A-D-PHexomutase_a/b/a-III"/>
</dbReference>
<dbReference type="InterPro" id="IPR005843">
    <property type="entry name" value="A-D-PHexomutase_C"/>
</dbReference>
<dbReference type="InterPro" id="IPR036900">
    <property type="entry name" value="A-D-PHexomutase_C_sf"/>
</dbReference>
<dbReference type="InterPro" id="IPR005841">
    <property type="entry name" value="Alpha-D-phosphohexomutase_SF"/>
</dbReference>
<dbReference type="InterPro" id="IPR006352">
    <property type="entry name" value="GlmM_bact"/>
</dbReference>
<dbReference type="InterPro" id="IPR050060">
    <property type="entry name" value="Phosphoglucosamine_mutase"/>
</dbReference>
<dbReference type="NCBIfam" id="TIGR01455">
    <property type="entry name" value="glmM"/>
    <property type="match status" value="1"/>
</dbReference>
<dbReference type="NCBIfam" id="NF008139">
    <property type="entry name" value="PRK10887.1"/>
    <property type="match status" value="1"/>
</dbReference>
<dbReference type="PANTHER" id="PTHR42946:SF1">
    <property type="entry name" value="PHOSPHOGLUCOMUTASE (ALPHA-D-GLUCOSE-1,6-BISPHOSPHATE-DEPENDENT)"/>
    <property type="match status" value="1"/>
</dbReference>
<dbReference type="PANTHER" id="PTHR42946">
    <property type="entry name" value="PHOSPHOHEXOSE MUTASE"/>
    <property type="match status" value="1"/>
</dbReference>
<dbReference type="Pfam" id="PF02878">
    <property type="entry name" value="PGM_PMM_I"/>
    <property type="match status" value="1"/>
</dbReference>
<dbReference type="Pfam" id="PF02879">
    <property type="entry name" value="PGM_PMM_II"/>
    <property type="match status" value="1"/>
</dbReference>
<dbReference type="Pfam" id="PF02880">
    <property type="entry name" value="PGM_PMM_III"/>
    <property type="match status" value="1"/>
</dbReference>
<dbReference type="Pfam" id="PF00408">
    <property type="entry name" value="PGM_PMM_IV"/>
    <property type="match status" value="1"/>
</dbReference>
<dbReference type="PRINTS" id="PR00509">
    <property type="entry name" value="PGMPMM"/>
</dbReference>
<dbReference type="SUPFAM" id="SSF55957">
    <property type="entry name" value="Phosphoglucomutase, C-terminal domain"/>
    <property type="match status" value="1"/>
</dbReference>
<dbReference type="SUPFAM" id="SSF53738">
    <property type="entry name" value="Phosphoglucomutase, first 3 domains"/>
    <property type="match status" value="3"/>
</dbReference>
<gene>
    <name evidence="1" type="primary">glmM</name>
    <name type="ordered locus">NMB1690</name>
</gene>
<name>GLMM_NEIMB</name>
<protein>
    <recommendedName>
        <fullName evidence="1">Phosphoglucosamine mutase</fullName>
        <ecNumber evidence="1">5.4.2.10</ecNumber>
    </recommendedName>
</protein>
<evidence type="ECO:0000255" key="1">
    <source>
        <dbReference type="HAMAP-Rule" id="MF_01554"/>
    </source>
</evidence>
<accession>Q9JY89</accession>
<keyword id="KW-0413">Isomerase</keyword>
<keyword id="KW-0460">Magnesium</keyword>
<keyword id="KW-0479">Metal-binding</keyword>
<keyword id="KW-0597">Phosphoprotein</keyword>
<keyword id="KW-1185">Reference proteome</keyword>